<proteinExistence type="evidence at protein level"/>
<comment type="function">
    <text evidence="1">Probable lipase.</text>
</comment>
<comment type="similarity">
    <text evidence="3">Belongs to the 'GDSL' lipolytic enzyme family. IAH1 subfamily.</text>
</comment>
<sequence length="249" mass="27974">MSLCERAASGSALLWPRVLLFGDSITQFSFQQGGWGSLLADRLVRKCDVLNRGFSGYNTRWAKIILPRLIRKGPGMENPVAVTIFFGANDSSLKDENPKQHVPLDEYSANLRDMVQYLRSVDVPRERVILITPPPLCEAAWEKECVLKGCKLNRLNSVVGEYANACLQVARDCGTDVLDLWTLMQKDSQDFSSYLSDGLHLSPMGNEFLFLNLCPLLDKKVSSLPWLLPYWKDVEEAKPELSLLGDGDY</sequence>
<evidence type="ECO:0000250" key="1"/>
<evidence type="ECO:0000250" key="2">
    <source>
        <dbReference type="UniProtKB" id="P41734"/>
    </source>
</evidence>
<evidence type="ECO:0000305" key="3"/>
<evidence type="ECO:0007744" key="4">
    <source>
    </source>
</evidence>
<feature type="chain" id="PRO_0000315724" description="Isoamyl acetate-hydrolyzing esterase 1 homolog">
    <location>
        <begin position="1"/>
        <end position="249"/>
    </location>
</feature>
<feature type="active site" description="Nucleophile" evidence="2">
    <location>
        <position position="24"/>
    </location>
</feature>
<feature type="active site" description="Proton donor" evidence="2">
    <location>
        <position position="197"/>
    </location>
</feature>
<feature type="active site" description="Proton acceptor" evidence="2">
    <location>
        <position position="200"/>
    </location>
</feature>
<feature type="site" description="Transition state stabilizer" evidence="2">
    <location>
        <position position="56"/>
    </location>
</feature>
<feature type="site" description="Transition state stabilizer" evidence="2">
    <location>
        <position position="89"/>
    </location>
</feature>
<feature type="modified residue" description="N6-succinyllysine" evidence="4">
    <location>
        <position position="63"/>
    </location>
</feature>
<reference key="1">
    <citation type="journal article" date="2005" name="Science">
        <title>The transcriptional landscape of the mammalian genome.</title>
        <authorList>
            <person name="Carninci P."/>
            <person name="Kasukawa T."/>
            <person name="Katayama S."/>
            <person name="Gough J."/>
            <person name="Frith M.C."/>
            <person name="Maeda N."/>
            <person name="Oyama R."/>
            <person name="Ravasi T."/>
            <person name="Lenhard B."/>
            <person name="Wells C."/>
            <person name="Kodzius R."/>
            <person name="Shimokawa K."/>
            <person name="Bajic V.B."/>
            <person name="Brenner S.E."/>
            <person name="Batalov S."/>
            <person name="Forrest A.R."/>
            <person name="Zavolan M."/>
            <person name="Davis M.J."/>
            <person name="Wilming L.G."/>
            <person name="Aidinis V."/>
            <person name="Allen J.E."/>
            <person name="Ambesi-Impiombato A."/>
            <person name="Apweiler R."/>
            <person name="Aturaliya R.N."/>
            <person name="Bailey T.L."/>
            <person name="Bansal M."/>
            <person name="Baxter L."/>
            <person name="Beisel K.W."/>
            <person name="Bersano T."/>
            <person name="Bono H."/>
            <person name="Chalk A.M."/>
            <person name="Chiu K.P."/>
            <person name="Choudhary V."/>
            <person name="Christoffels A."/>
            <person name="Clutterbuck D.R."/>
            <person name="Crowe M.L."/>
            <person name="Dalla E."/>
            <person name="Dalrymple B.P."/>
            <person name="de Bono B."/>
            <person name="Della Gatta G."/>
            <person name="di Bernardo D."/>
            <person name="Down T."/>
            <person name="Engstrom P."/>
            <person name="Fagiolini M."/>
            <person name="Faulkner G."/>
            <person name="Fletcher C.F."/>
            <person name="Fukushima T."/>
            <person name="Furuno M."/>
            <person name="Futaki S."/>
            <person name="Gariboldi M."/>
            <person name="Georgii-Hemming P."/>
            <person name="Gingeras T.R."/>
            <person name="Gojobori T."/>
            <person name="Green R.E."/>
            <person name="Gustincich S."/>
            <person name="Harbers M."/>
            <person name="Hayashi Y."/>
            <person name="Hensch T.K."/>
            <person name="Hirokawa N."/>
            <person name="Hill D."/>
            <person name="Huminiecki L."/>
            <person name="Iacono M."/>
            <person name="Ikeo K."/>
            <person name="Iwama A."/>
            <person name="Ishikawa T."/>
            <person name="Jakt M."/>
            <person name="Kanapin A."/>
            <person name="Katoh M."/>
            <person name="Kawasawa Y."/>
            <person name="Kelso J."/>
            <person name="Kitamura H."/>
            <person name="Kitano H."/>
            <person name="Kollias G."/>
            <person name="Krishnan S.P."/>
            <person name="Kruger A."/>
            <person name="Kummerfeld S.K."/>
            <person name="Kurochkin I.V."/>
            <person name="Lareau L.F."/>
            <person name="Lazarevic D."/>
            <person name="Lipovich L."/>
            <person name="Liu J."/>
            <person name="Liuni S."/>
            <person name="McWilliam S."/>
            <person name="Madan Babu M."/>
            <person name="Madera M."/>
            <person name="Marchionni L."/>
            <person name="Matsuda H."/>
            <person name="Matsuzawa S."/>
            <person name="Miki H."/>
            <person name="Mignone F."/>
            <person name="Miyake S."/>
            <person name="Morris K."/>
            <person name="Mottagui-Tabar S."/>
            <person name="Mulder N."/>
            <person name="Nakano N."/>
            <person name="Nakauchi H."/>
            <person name="Ng P."/>
            <person name="Nilsson R."/>
            <person name="Nishiguchi S."/>
            <person name="Nishikawa S."/>
            <person name="Nori F."/>
            <person name="Ohara O."/>
            <person name="Okazaki Y."/>
            <person name="Orlando V."/>
            <person name="Pang K.C."/>
            <person name="Pavan W.J."/>
            <person name="Pavesi G."/>
            <person name="Pesole G."/>
            <person name="Petrovsky N."/>
            <person name="Piazza S."/>
            <person name="Reed J."/>
            <person name="Reid J.F."/>
            <person name="Ring B.Z."/>
            <person name="Ringwald M."/>
            <person name="Rost B."/>
            <person name="Ruan Y."/>
            <person name="Salzberg S.L."/>
            <person name="Sandelin A."/>
            <person name="Schneider C."/>
            <person name="Schoenbach C."/>
            <person name="Sekiguchi K."/>
            <person name="Semple C.A."/>
            <person name="Seno S."/>
            <person name="Sessa L."/>
            <person name="Sheng Y."/>
            <person name="Shibata Y."/>
            <person name="Shimada H."/>
            <person name="Shimada K."/>
            <person name="Silva D."/>
            <person name="Sinclair B."/>
            <person name="Sperling S."/>
            <person name="Stupka E."/>
            <person name="Sugiura K."/>
            <person name="Sultana R."/>
            <person name="Takenaka Y."/>
            <person name="Taki K."/>
            <person name="Tammoja K."/>
            <person name="Tan S.L."/>
            <person name="Tang S."/>
            <person name="Taylor M.S."/>
            <person name="Tegner J."/>
            <person name="Teichmann S.A."/>
            <person name="Ueda H.R."/>
            <person name="van Nimwegen E."/>
            <person name="Verardo R."/>
            <person name="Wei C.L."/>
            <person name="Yagi K."/>
            <person name="Yamanishi H."/>
            <person name="Zabarovsky E."/>
            <person name="Zhu S."/>
            <person name="Zimmer A."/>
            <person name="Hide W."/>
            <person name="Bult C."/>
            <person name="Grimmond S.M."/>
            <person name="Teasdale R.D."/>
            <person name="Liu E.T."/>
            <person name="Brusic V."/>
            <person name="Quackenbush J."/>
            <person name="Wahlestedt C."/>
            <person name="Mattick J.S."/>
            <person name="Hume D.A."/>
            <person name="Kai C."/>
            <person name="Sasaki D."/>
            <person name="Tomaru Y."/>
            <person name="Fukuda S."/>
            <person name="Kanamori-Katayama M."/>
            <person name="Suzuki M."/>
            <person name="Aoki J."/>
            <person name="Arakawa T."/>
            <person name="Iida J."/>
            <person name="Imamura K."/>
            <person name="Itoh M."/>
            <person name="Kato T."/>
            <person name="Kawaji H."/>
            <person name="Kawagashira N."/>
            <person name="Kawashima T."/>
            <person name="Kojima M."/>
            <person name="Kondo S."/>
            <person name="Konno H."/>
            <person name="Nakano K."/>
            <person name="Ninomiya N."/>
            <person name="Nishio T."/>
            <person name="Okada M."/>
            <person name="Plessy C."/>
            <person name="Shibata K."/>
            <person name="Shiraki T."/>
            <person name="Suzuki S."/>
            <person name="Tagami M."/>
            <person name="Waki K."/>
            <person name="Watahiki A."/>
            <person name="Okamura-Oho Y."/>
            <person name="Suzuki H."/>
            <person name="Kawai J."/>
            <person name="Hayashizaki Y."/>
        </authorList>
    </citation>
    <scope>NUCLEOTIDE SEQUENCE [LARGE SCALE MRNA]</scope>
    <source>
        <strain>C57BL/6J</strain>
        <tissue>Cerebellum</tissue>
    </source>
</reference>
<reference key="2">
    <citation type="journal article" date="2004" name="Genome Res.">
        <title>The status, quality, and expansion of the NIH full-length cDNA project: the Mammalian Gene Collection (MGC).</title>
        <authorList>
            <consortium name="The MGC Project Team"/>
        </authorList>
    </citation>
    <scope>NUCLEOTIDE SEQUENCE [LARGE SCALE MRNA]</scope>
    <source>
        <tissue>Brain</tissue>
        <tissue>Kidney</tissue>
    </source>
</reference>
<reference key="3">
    <citation type="journal article" date="2010" name="Cell">
        <title>A tissue-specific atlas of mouse protein phosphorylation and expression.</title>
        <authorList>
            <person name="Huttlin E.L."/>
            <person name="Jedrychowski M.P."/>
            <person name="Elias J.E."/>
            <person name="Goswami T."/>
            <person name="Rad R."/>
            <person name="Beausoleil S.A."/>
            <person name="Villen J."/>
            <person name="Haas W."/>
            <person name="Sowa M.E."/>
            <person name="Gygi S.P."/>
        </authorList>
    </citation>
    <scope>IDENTIFICATION BY MASS SPECTROMETRY [LARGE SCALE ANALYSIS]</scope>
    <source>
        <tissue>Brain</tissue>
        <tissue>Brown adipose tissue</tissue>
        <tissue>Heart</tissue>
        <tissue>Kidney</tissue>
        <tissue>Liver</tissue>
        <tissue>Lung</tissue>
        <tissue>Pancreas</tissue>
        <tissue>Spleen</tissue>
        <tissue>Testis</tissue>
    </source>
</reference>
<reference key="4">
    <citation type="journal article" date="2013" name="Mol. Cell">
        <title>SIRT5-mediated lysine desuccinylation impacts diverse metabolic pathways.</title>
        <authorList>
            <person name="Park J."/>
            <person name="Chen Y."/>
            <person name="Tishkoff D.X."/>
            <person name="Peng C."/>
            <person name="Tan M."/>
            <person name="Dai L."/>
            <person name="Xie Z."/>
            <person name="Zhang Y."/>
            <person name="Zwaans B.M."/>
            <person name="Skinner M.E."/>
            <person name="Lombard D.B."/>
            <person name="Zhao Y."/>
        </authorList>
    </citation>
    <scope>SUCCINYLATION [LARGE SCALE ANALYSIS] AT LYS-63</scope>
    <scope>IDENTIFICATION BY MASS SPECTROMETRY [LARGE SCALE ANALYSIS]</scope>
    <source>
        <tissue>Liver</tissue>
    </source>
</reference>
<keyword id="KW-0378">Hydrolase</keyword>
<keyword id="KW-0442">Lipid degradation</keyword>
<keyword id="KW-0443">Lipid metabolism</keyword>
<keyword id="KW-1185">Reference proteome</keyword>
<accession>Q9DB29</accession>
<protein>
    <recommendedName>
        <fullName>Isoamyl acetate-hydrolyzing esterase 1 homolog</fullName>
        <ecNumber>3.1.-.-</ecNumber>
    </recommendedName>
</protein>
<organism>
    <name type="scientific">Mus musculus</name>
    <name type="common">Mouse</name>
    <dbReference type="NCBI Taxonomy" id="10090"/>
    <lineage>
        <taxon>Eukaryota</taxon>
        <taxon>Metazoa</taxon>
        <taxon>Chordata</taxon>
        <taxon>Craniata</taxon>
        <taxon>Vertebrata</taxon>
        <taxon>Euteleostomi</taxon>
        <taxon>Mammalia</taxon>
        <taxon>Eutheria</taxon>
        <taxon>Euarchontoglires</taxon>
        <taxon>Glires</taxon>
        <taxon>Rodentia</taxon>
        <taxon>Myomorpha</taxon>
        <taxon>Muroidea</taxon>
        <taxon>Muridae</taxon>
        <taxon>Murinae</taxon>
        <taxon>Mus</taxon>
        <taxon>Mus</taxon>
    </lineage>
</organism>
<name>IAH1_MOUSE</name>
<gene>
    <name type="primary">Iah1</name>
</gene>
<dbReference type="EC" id="3.1.-.-"/>
<dbReference type="EMBL" id="AK005287">
    <property type="protein sequence ID" value="BAB23934.1"/>
    <property type="molecule type" value="mRNA"/>
</dbReference>
<dbReference type="EMBL" id="BC060949">
    <property type="protein sequence ID" value="AAH60949.1"/>
    <property type="molecule type" value="mRNA"/>
</dbReference>
<dbReference type="EMBL" id="BC087901">
    <property type="protein sequence ID" value="AAH87901.1"/>
    <property type="molecule type" value="mRNA"/>
</dbReference>
<dbReference type="CCDS" id="CCDS25835.1"/>
<dbReference type="RefSeq" id="NP_080623.2">
    <property type="nucleotide sequence ID" value="NM_026347.3"/>
</dbReference>
<dbReference type="SMR" id="Q9DB29"/>
<dbReference type="FunCoup" id="Q9DB29">
    <property type="interactions" value="2037"/>
</dbReference>
<dbReference type="IntAct" id="Q9DB29">
    <property type="interactions" value="1"/>
</dbReference>
<dbReference type="MINT" id="Q9DB29"/>
<dbReference type="STRING" id="10090.ENSMUSP00000076090"/>
<dbReference type="GlyGen" id="Q9DB29">
    <property type="glycosylation" value="2 sites, 1 O-linked glycan (1 site)"/>
</dbReference>
<dbReference type="iPTMnet" id="Q9DB29"/>
<dbReference type="PhosphoSitePlus" id="Q9DB29"/>
<dbReference type="SwissPalm" id="Q9DB29"/>
<dbReference type="REPRODUCTION-2DPAGE" id="IPI00119004"/>
<dbReference type="jPOST" id="Q9DB29"/>
<dbReference type="PaxDb" id="10090-ENSMUSP00000076090"/>
<dbReference type="PeptideAtlas" id="Q9DB29"/>
<dbReference type="ProteomicsDB" id="267035"/>
<dbReference type="Pumba" id="Q9DB29"/>
<dbReference type="Antibodypedia" id="47292">
    <property type="antibodies" value="101 antibodies from 24 providers"/>
</dbReference>
<dbReference type="DNASU" id="67732"/>
<dbReference type="Ensembl" id="ENSMUST00000076813.8">
    <property type="protein sequence ID" value="ENSMUSP00000076090.7"/>
    <property type="gene ID" value="ENSMUSG00000062054.8"/>
</dbReference>
<dbReference type="GeneID" id="67732"/>
<dbReference type="KEGG" id="mmu:67732"/>
<dbReference type="UCSC" id="uc007nds.1">
    <property type="organism name" value="mouse"/>
</dbReference>
<dbReference type="AGR" id="MGI:1914982"/>
<dbReference type="CTD" id="285148"/>
<dbReference type="MGI" id="MGI:1914982">
    <property type="gene designation" value="Iah1"/>
</dbReference>
<dbReference type="VEuPathDB" id="HostDB:ENSMUSG00000062054"/>
<dbReference type="eggNOG" id="KOG3035">
    <property type="taxonomic scope" value="Eukaryota"/>
</dbReference>
<dbReference type="GeneTree" id="ENSGT00390000008069"/>
<dbReference type="HOGENOM" id="CLU_051989_0_2_1"/>
<dbReference type="InParanoid" id="Q9DB29"/>
<dbReference type="OMA" id="VIWPKVI"/>
<dbReference type="OrthoDB" id="671439at2759"/>
<dbReference type="PhylomeDB" id="Q9DB29"/>
<dbReference type="TreeFam" id="TF328918"/>
<dbReference type="BioGRID-ORCS" id="67732">
    <property type="hits" value="1 hit in 76 CRISPR screens"/>
</dbReference>
<dbReference type="ChiTaRS" id="Iah1">
    <property type="organism name" value="mouse"/>
</dbReference>
<dbReference type="PRO" id="PR:Q9DB29"/>
<dbReference type="Proteomes" id="UP000000589">
    <property type="component" value="Chromosome 12"/>
</dbReference>
<dbReference type="RNAct" id="Q9DB29">
    <property type="molecule type" value="protein"/>
</dbReference>
<dbReference type="Bgee" id="ENSMUSG00000062054">
    <property type="expression patterns" value="Expressed in right kidney and 248 other cell types or tissues"/>
</dbReference>
<dbReference type="ExpressionAtlas" id="Q9DB29">
    <property type="expression patterns" value="baseline and differential"/>
</dbReference>
<dbReference type="GO" id="GO:0016788">
    <property type="term" value="F:hydrolase activity, acting on ester bonds"/>
    <property type="evidence" value="ECO:0007669"/>
    <property type="project" value="InterPro"/>
</dbReference>
<dbReference type="GO" id="GO:0042802">
    <property type="term" value="F:identical protein binding"/>
    <property type="evidence" value="ECO:0007669"/>
    <property type="project" value="Ensembl"/>
</dbReference>
<dbReference type="GO" id="GO:0010467">
    <property type="term" value="P:gene expression"/>
    <property type="evidence" value="ECO:0000315"/>
    <property type="project" value="MGI"/>
</dbReference>
<dbReference type="GO" id="GO:0016042">
    <property type="term" value="P:lipid catabolic process"/>
    <property type="evidence" value="ECO:0007669"/>
    <property type="project" value="UniProtKB-KW"/>
</dbReference>
<dbReference type="CDD" id="cd01838">
    <property type="entry name" value="Isoamyl_acetate_hydrolase_like"/>
    <property type="match status" value="1"/>
</dbReference>
<dbReference type="FunFam" id="3.40.50.1110:FF:000002">
    <property type="entry name" value="isoamyl acetate-hydrolyzing esterase 1 homolog"/>
    <property type="match status" value="1"/>
</dbReference>
<dbReference type="Gene3D" id="3.40.50.1110">
    <property type="entry name" value="SGNH hydrolase"/>
    <property type="match status" value="1"/>
</dbReference>
<dbReference type="InterPro" id="IPR001087">
    <property type="entry name" value="GDSL"/>
</dbReference>
<dbReference type="InterPro" id="IPR045136">
    <property type="entry name" value="Iah1-like"/>
</dbReference>
<dbReference type="InterPro" id="IPR036514">
    <property type="entry name" value="SGNH_hydro_sf"/>
</dbReference>
<dbReference type="PANTHER" id="PTHR14209">
    <property type="entry name" value="ISOAMYL ACETATE-HYDROLYZING ESTERASE 1"/>
    <property type="match status" value="1"/>
</dbReference>
<dbReference type="PANTHER" id="PTHR14209:SF19">
    <property type="entry name" value="ISOAMYL ACETATE-HYDROLYZING ESTERASE 1 HOMOLOG"/>
    <property type="match status" value="1"/>
</dbReference>
<dbReference type="Pfam" id="PF00657">
    <property type="entry name" value="Lipase_GDSL"/>
    <property type="match status" value="1"/>
</dbReference>
<dbReference type="SUPFAM" id="SSF52266">
    <property type="entry name" value="SGNH hydrolase"/>
    <property type="match status" value="1"/>
</dbReference>